<gene>
    <name type="primary">epi-1</name>
    <name type="ORF">K08C7.3</name>
</gene>
<name>EPI1_CAEEL</name>
<proteinExistence type="evidence at protein level"/>
<evidence type="ECO:0000250" key="1">
    <source>
        <dbReference type="UniProtKB" id="P25391"/>
    </source>
</evidence>
<evidence type="ECO:0000255" key="2"/>
<evidence type="ECO:0000255" key="3">
    <source>
        <dbReference type="PROSITE-ProRule" id="PRU00122"/>
    </source>
</evidence>
<evidence type="ECO:0000255" key="4">
    <source>
        <dbReference type="PROSITE-ProRule" id="PRU00458"/>
    </source>
</evidence>
<evidence type="ECO:0000255" key="5">
    <source>
        <dbReference type="PROSITE-ProRule" id="PRU00460"/>
    </source>
</evidence>
<evidence type="ECO:0000255" key="6">
    <source>
        <dbReference type="PROSITE-ProRule" id="PRU00466"/>
    </source>
</evidence>
<evidence type="ECO:0000256" key="7">
    <source>
        <dbReference type="SAM" id="MobiDB-lite"/>
    </source>
</evidence>
<evidence type="ECO:0000269" key="8">
    <source>
    </source>
</evidence>
<evidence type="ECO:0000269" key="9">
    <source>
    </source>
</evidence>
<evidence type="ECO:0000269" key="10">
    <source>
    </source>
</evidence>
<evidence type="ECO:0000269" key="11">
    <source>
    </source>
</evidence>
<evidence type="ECO:0000269" key="12">
    <source>
    </source>
</evidence>
<evidence type="ECO:0000303" key="13">
    <source>
    </source>
</evidence>
<evidence type="ECO:0000305" key="14">
    <source>
    </source>
</evidence>
<organism>
    <name type="scientific">Caenorhabditis elegans</name>
    <dbReference type="NCBI Taxonomy" id="6239"/>
    <lineage>
        <taxon>Eukaryota</taxon>
        <taxon>Metazoa</taxon>
        <taxon>Ecdysozoa</taxon>
        <taxon>Nematoda</taxon>
        <taxon>Chromadorea</taxon>
        <taxon>Rhabditida</taxon>
        <taxon>Rhabditina</taxon>
        <taxon>Rhabditomorpha</taxon>
        <taxon>Rhabditoidea</taxon>
        <taxon>Rhabditidae</taxon>
        <taxon>Peloderinae</taxon>
        <taxon>Caenorhabditis</taxon>
    </lineage>
</organism>
<protein>
    <recommendedName>
        <fullName>Laminin-like protein epi-1</fullName>
    </recommendedName>
    <alternativeName>
        <fullName evidence="13">Laminin alphaB</fullName>
    </alternativeName>
    <alternativeName>
        <fullName evidence="14">Laminin subunit alpha epi-1</fullName>
    </alternativeName>
</protein>
<comment type="function">
    <text evidence="1 9 11">Binding to cells via a high affinity receptor, laminin is thought to mediate the attachment, migration and organization of cells into tissues during embryonic development by interacting with other extracellular matrix components (By similarity). Required to assemble a stable basement membrane and for organizing receptor complexes and cytoskeletal components to the proper cell surfaces (PubMed:12783803). During embryogenesis, does not require the presence of collagen type IV in order to associate with cell surfaces, prior to assembly of the prototypical basement membrane (PubMed:12783803). During the formation of neuromuscular junctions at the larval stage, negatively regulates membrane protrusion from body wall muscles, probably downstream of the integrin complex formed by pat-2 and pat-3 (PubMed:16495308). Probably plays a distinct role from the related laminin subunit alpha lam-3 (PubMed:12783803).</text>
</comment>
<comment type="subunit">
    <text evidence="1">Laminin is a complex glycoprotein, consisting of three different polypeptide chains (alpha, beta, gamma), which are bound to each other by disulfide bonds into a cross-shaped molecule comprising one long and three short arms with globules at each end.</text>
</comment>
<comment type="subcellular location">
    <subcellularLocation>
        <location evidence="9">Secreted</location>
        <location evidence="9">Extracellular space</location>
        <location evidence="9">Extracellular matrix</location>
    </subcellularLocation>
    <subcellularLocation>
        <location evidence="9">Secreted</location>
        <location evidence="9">Extracellular space</location>
    </subcellularLocation>
    <subcellularLocation>
        <location evidence="9">Secreted</location>
    </subcellularLocation>
    <subcellularLocation>
        <location evidence="9">Secreted</location>
        <location evidence="9">Extracellular space</location>
        <location evidence="9">Extracellular matrix</location>
        <location evidence="9">Basement membrane</location>
    </subcellularLocation>
</comment>
<comment type="developmental stage">
    <text evidence="9">First expressed between primary tissue layers near the end of gastrulation, at the 28-cell stage (at protein level) (PubMed:12783803). Detectable in all the major basement membranes during the remainder of embryogenesis, throughout larval development and in the adult (at protein level) (PubMed:12783803). Less expression in the basement membranes surrounding pharynx, intestine, body wall muscle and epidermis, and higher in the basement membranes surrounding gonad, distal tip cell, vulval muscle, intestinal muscle, anal depressor muscle and coelomocytes (at protein level) (PubMed:12783803). Earliest gene expression in cells that are ingressing through a furrow along the ventral midline (PubMed:12783803).</text>
</comment>
<comment type="disruption phenotype">
    <text evidence="9 11">Lacks detectable epi-1, but has no effect on tissue localization of laminin subunit alpha lam-3 (PubMed:12783803). Sterility (PubMed:12783803). Disrupted basement membrane integrity around body wall muscles, epidermis, gonad, intestine, and nerves (PubMed:12783803). Abnormal cell polarity, such that apical and basal features are poorly organized (PubMed:12783803). RNAi-mediated knockdown in L4 larval stage, causes ectopic membrane extensions from body wall muscles (PubMed:16495308). Simultaneous knockdown of laminin subunit alpha lam-3 increases likelihood of arrest during embryogenesis (PubMed:12783803).</text>
</comment>
<comment type="miscellaneous">
    <text evidence="9">Tissue-specific expression of the laminin alpha subunits lam-3 and epi-1 begins early, before or as organogenesis proceeds; furthermore, the tissue localization of the two alpha subunits are independent.</text>
</comment>
<sequence>MSPYDSSPWATKALFLIVTLLAQFTYSQVLTPSQITISHRKPITATSTCGEIQGQPVTEIYCSLTGSTQYTPLNSYSYQDDEQQKSWSQYENPMVRGGHGCGHCNAGNENSHPAANMVDGNNSWWMSPPLSRGLQHNEVNITIDLEQEFHVAYVWIQMANSPRPGSWVLERSTDHGKTYQPWFNFAENAAECMRRFGMESLSPISEDDSVTCRTDMASLQPLENAEMVIRILEHRPSSRQFATSEALQNFTRATNVRLRLLGTRTLQGHLMDMNEWRDPTVTRRYFYAIKEIMIGGRCVCNGHAVTCDILEPQRPKSLLCRCEHNTCGDMCERCCPGFVQKQWQAATAHNNFTCEACNCFGRSNECEYDAEVDLNKQSIDSQGNYEGGGVCKNCRENTEGVNCNKCSFGYFRPEGVTWNEPQPCKVCDCDPDKHTGACAEETGKCECLPRFVGEDCDQCASGYYDAPKCKPCECNVNGTIGDVCLPEDGQCPCKAGFGGTFCETCADGYTNVTAGCVECVCDATGSEHGNCSASTGQCECKPAYAGLSCDKCQVGYFGDDCKFCNCDPMGTEGGVCDQTTGQCLCKEGFAGDKCDRCDIAFYGYPNCKACACDGAGITSPECDATSGQCPCNGNFTGRTCDKCAAGFYNYPDCRGCECLLSGAKGQTCDSNGQCYCKGNFEGERCDRCKPNFYNFPICEECNCNPSGVTRDFQGCDKVSPGELCSCRKHVTGRICDQCKPTFWDLQYHHEDGCRSCDCNVNGTISGLNTCDLKTGQCMCKKNADGRRCDQCADGFYRLNSYNQMGCESCHCDIGGALRAECDITSGQCKCRPRVTGLRCDQPIENHYFPTLWHNQYEAEDAHTEDQKPVRFAVDPEQFADFSWRGYAVFSPIQDKILIDVDITKATVYRLLFRYRNPTSVPVTATVTINPRFTHTHDVEQTGKATFAPGDLPAMKEITVDGKPFVLNPGKWSLAISTKQRLFLDYVVVLPAEYYEGTVLRQRAPQPCLSHSTKNTTCVDLIYPPIPSVSRQFVDMDKVPFNYINEDGTTTALEHVPVEILLSEITGPAAFVRADENPRVVEAKLDVPETGEYVIVLEYHNREETDGNIGVGISQNDKEVLNGNAVIHHCPYATFCRELVSSEGTIPYIPLEKGEATVRLNIKPNHEFGLAGVQLIKKSDFSSEYLQQVPVCIKKDARCVQQSYPPAADSVTTEAESGSNMDKSILGDKLPFPVSNSKEMRVVPLDDAQATVEISGVVPTRGHYMFMVHYFNPDNTPINIDVLIQNEHYFQGDSCNSFACSSVPLAFCPSISGCRALIRDKERPEVIQFYMDDKYTATFYHNSSQKGPIYIDSITAVPYNSYKDKLMEPLALDLSNEFLKECSEDNLKNHPESVSDFCKQKIFSLTTDFNAAALSCDCVAQGSESFQCEQYGGQCKCKPGVIGRRCERCAPGYYNFPECIKCQCNAGQQCDERTGQCFCPPHVEGQTCDRCVSNAFGYDPLIGCQKCGCHPQGSEGGNLVCDPESGQCLCRESMGGRQCDRCLAGFYGFPHCYGCSCNRAGTTEEICDATNAQCKCKENVYGGRCEACKAGTFDLSAENPLGCVNCFCFGVTDSCRSSMYPVTIMSVDMSSFLTTDDNGMVDNKDDTVIYTSEETSPNSVYFNVPIEKKDYTTSYGLKLTFKLSTVPRGGRKSMNADADVRLTGANMTIEYWASEQPTNPEEQFTVKCKLVPENFLTAEGKTVTREELMKVLHSLQNITLKASYFDHPKTSTLYEFGLEISEPNGVDSVIKASSVEQCQCPAPYTGPSCQLCASGYHRVQSGSFLGACVPCECNGHSATCDPDTGICTDCEHNTNGDHCEFCNEGHYGNATNGSPYDCMACACPFAPTNNFAKSCDVSEEGQLLQCNCKPGYTGDRCDRCASGFFGHPQISGESCSPCQCNGNNNLTDSRSCHPNSGDCYLCEQNTDGRHCESCAAWFYGDAVTAKNCSSCECSQCGSQYCDNKSGGCECKINVEGDSCDRCKPDHWGFSKCQGCQGCHCGTAAFNTQCNVENGQCTCRPGATGMRCEHCEHGYWNYGEHGCDKCDCEADLSMGTVCDVRTGQCHCQEGATGSRCDQCLPSYLRIPTYGCRRCDECVHHLIGDVDNLELEIDVLGTAIANISSATIVGARLARNKKEFNDINEITKMLNDEENSFGNVFGDAQDILTNSTQIQNKLVRTKTHSQNSVSSAKNITLNGTEFLQEVMKRAQRARQSVRSLAEIALAIGSSSKAVNVDPRLLKEAEETLMTLEAASADQYPEKAQTVPGKLEEIQKKIQEETEKLDKQKETFEAQKKRAEELAAYLNSAQQLLKESKSKADKSNNIAKMLQLTKVENLVAAITDDLERVEAAKGEFQKLNVAIGNITENLKDKREEMTHAVTTLNETRNDVAEALEAAKKRVRRDEKSVDMQLVNAKAHELHLQATTLRQTFDNNKDNTDQAVEAANAFSNLTDTLKNAKAQIDNAYEALSAEPAFAESVQNARDKPFPDETKEKIDALSKTVSQDLKETEKLKKQLEQLTELSEKLRKRKEAVKAGIPKYSKNTLDSIDEKVQEVEKLKAEIDANIEETRAKISEIAGKAEEITEKANSAMEGIRLARRNSVQLNKLAPVIVSKFEELKKLSSARSAKVDSVSDKVSQIKEMIAVARDAANRIKLGAHFEKGSSLDLNIPQRVTRSAAHADISFYFRTEQEHGIPLFFGNEETAVGSRAVPTADYVAAEIEYGRPKITVDLGDAPAVVKLDTPVNDGLWRRLNIERIGKTVSVTLSKPNSVETAETKSSVAGGNKSVLNLNQQISRLFVGGVPTSARISKDLYNRDFVGDIESLKLHGEPIGLWNSREKGNTNVNGAQKKPKITDNADELVVSLDGEGYTSYKPSHWNPRKATKISLSFLTFSPHGLLFFVGKDKDFMALELSDGGVKLSVDLGSGVGQWITESSNYNDGKWHTVSIVREEKHVKIMIDGETEVLEGDVPGKDSEMSVTEFLYIGGTPSGLSVRTTIVPLRGCIKSVKLGSDNVDLESSHASKGVRSGCPLHSVRTVSFLSDRTTASFNNATEFSEDVSVTFKFKTRSIRQPSSLFTVNDDEDSVLSVSINEDGILTVTSGEDIATLELAASPDEKWHYVSIRKTKYIIRIDADDSFSNEVARKHADDSNPDASFLSAFFGKSGETPSFVGCIGDVTLNGKLLDFANSEIKEISLNGCSLSDDENISTTTTAAPKPTDDSDVAVLPIDEEEESTTTTTTTTTEEPTEEPAEARPDGHCSLPEDPMVQFEDAEGFNFGSQQYSRIEYDILPEAIDKSGEFTFKIRPTSDNGIIFIATNKRTDHIAVMLEHGRVVFTYDTGSGQVIIKSDKSIIDGRWHTIKVSRRGKSAHLIVDDNSYESEGAANQNEDLIETQPPFYVGGVPADLAGFARNLVVGVRSQFSGCIKDFKLNGKSLDNGKEFGTEQCSQFSEPGMYFGKDGGYAIVQKDYEVGLTFGLEVEMRPRMKNGILFSVGVLEYITVEFVNGSIKTTVESGSGGEELWHHPDIENQYCDGQWQSFKISKKRNLLTVAVNGKAHLKILKKAKTDVLTKDPLYFGGLPEGVTNKGIKTNKPFVGCIRFVSFGLKKDRKIRRKKQVDTERFDVFGDVHRNACPAI</sequence>
<feature type="signal peptide" evidence="2">
    <location>
        <begin position="1"/>
        <end position="27"/>
    </location>
</feature>
<feature type="chain" id="PRO_0000017100" description="Laminin-like protein epi-1">
    <location>
        <begin position="28"/>
        <end position="3672"/>
    </location>
</feature>
<feature type="domain" description="Laminin N-terminal" evidence="6">
    <location>
        <begin position="28"/>
        <end position="297"/>
    </location>
</feature>
<feature type="domain" description="Laminin EGF-like 1" evidence="5">
    <location>
        <begin position="298"/>
        <end position="356"/>
    </location>
</feature>
<feature type="domain" description="Laminin EGF-like 2" evidence="5">
    <location>
        <begin position="357"/>
        <end position="426"/>
    </location>
</feature>
<feature type="domain" description="Laminin EGF-like 3" evidence="5">
    <location>
        <begin position="427"/>
        <end position="471"/>
    </location>
</feature>
<feature type="domain" description="Laminin EGF-like 4" evidence="5">
    <location>
        <begin position="472"/>
        <end position="518"/>
    </location>
</feature>
<feature type="domain" description="Laminin EGF-like 5" evidence="5">
    <location>
        <begin position="519"/>
        <end position="563"/>
    </location>
</feature>
<feature type="domain" description="Laminin EGF-like 6" evidence="5">
    <location>
        <begin position="564"/>
        <end position="609"/>
    </location>
</feature>
<feature type="domain" description="Laminin EGF-like 7" evidence="5">
    <location>
        <begin position="610"/>
        <end position="655"/>
    </location>
</feature>
<feature type="domain" description="Laminin EGF-like 8" evidence="5">
    <location>
        <begin position="656"/>
        <end position="700"/>
    </location>
</feature>
<feature type="domain" description="Laminin EGF-like 9" evidence="5">
    <location>
        <begin position="701"/>
        <end position="755"/>
    </location>
</feature>
<feature type="domain" description="Laminin EGF-like 10" evidence="5">
    <location>
        <begin position="756"/>
        <end position="808"/>
    </location>
</feature>
<feature type="domain" description="Laminin EGF-like 11; truncated" evidence="5">
    <location>
        <begin position="809"/>
        <end position="839"/>
    </location>
</feature>
<feature type="domain" description="Laminin EGF-like 12" evidence="5">
    <location>
        <begin position="1415"/>
        <end position="1460"/>
    </location>
</feature>
<feature type="domain" description="Laminin EGF-like 13" evidence="5">
    <location>
        <begin position="1461"/>
        <end position="1505"/>
    </location>
</feature>
<feature type="domain" description="Laminin EGF-like 14" evidence="5">
    <location>
        <begin position="1506"/>
        <end position="1553"/>
    </location>
</feature>
<feature type="domain" description="Laminin EGF-like 15" evidence="5">
    <location>
        <begin position="1554"/>
        <end position="1604"/>
    </location>
</feature>
<feature type="domain" description="Laminin EGF-like 16; first part" evidence="5">
    <location>
        <begin position="1605"/>
        <end position="1614"/>
    </location>
</feature>
<feature type="domain" description="Laminin IV type A" evidence="4">
    <location>
        <begin position="1615"/>
        <end position="1796"/>
    </location>
</feature>
<feature type="domain" description="Laminin EGF-like 16; second part" evidence="5">
    <location>
        <begin position="1797"/>
        <end position="1829"/>
    </location>
</feature>
<feature type="domain" description="Laminin EGF-like 17" evidence="5">
    <location>
        <begin position="1830"/>
        <end position="1879"/>
    </location>
</feature>
<feature type="domain" description="Laminin EGF-like 18" evidence="5">
    <location>
        <begin position="1880"/>
        <end position="1936"/>
    </location>
</feature>
<feature type="domain" description="Laminin EGF-like 19" evidence="5">
    <location>
        <begin position="1937"/>
        <end position="1989"/>
    </location>
</feature>
<feature type="domain" description="Laminin EGF-like 20" evidence="5">
    <location>
        <begin position="1990"/>
        <end position="2036"/>
    </location>
</feature>
<feature type="domain" description="Laminin EGF-like 21" evidence="5">
    <location>
        <begin position="2037"/>
        <end position="2083"/>
    </location>
</feature>
<feature type="domain" description="Laminin EGF-like 22" evidence="5">
    <location>
        <begin position="2084"/>
        <end position="2131"/>
    </location>
</feature>
<feature type="domain" description="Laminin G-like 1" evidence="3">
    <location>
        <begin position="2693"/>
        <end position="2884"/>
    </location>
</feature>
<feature type="domain" description="Laminin G-like 2" evidence="3">
    <location>
        <begin position="2896"/>
        <end position="3066"/>
    </location>
</feature>
<feature type="domain" description="Laminin G-like 3" evidence="3">
    <location>
        <begin position="3072"/>
        <end position="3235"/>
    </location>
</feature>
<feature type="domain" description="Laminin G-like 4" evidence="3">
    <location>
        <begin position="3310"/>
        <end position="3482"/>
    </location>
</feature>
<feature type="domain" description="Laminin G-like 5" evidence="3">
    <location>
        <begin position="3488"/>
        <end position="3669"/>
    </location>
</feature>
<feature type="region of interest" description="Disordered" evidence="7">
    <location>
        <begin position="3236"/>
        <end position="3294"/>
    </location>
</feature>
<feature type="compositionally biased region" description="Low complexity" evidence="7">
    <location>
        <begin position="3271"/>
        <end position="3280"/>
    </location>
</feature>
<feature type="glycosylation site" description="N-linked (GlcNAc...) asparagine" evidence="12">
    <location>
        <position position="121"/>
    </location>
</feature>
<feature type="glycosylation site" description="N-linked (GlcNAc...) asparagine" evidence="2">
    <location>
        <position position="140"/>
    </location>
</feature>
<feature type="glycosylation site" description="N-linked (GlcNAc...) asparagine" evidence="8 10 12">
    <location>
        <position position="249"/>
    </location>
</feature>
<feature type="glycosylation site" description="N-linked (GlcNAc...) asparagine" evidence="10 12">
    <location>
        <position position="351"/>
    </location>
</feature>
<feature type="glycosylation site" description="N-linked (GlcNAc...) asparagine" evidence="12">
    <location>
        <position position="477"/>
    </location>
</feature>
<feature type="glycosylation site" description="N-linked (GlcNAc...) asparagine" evidence="2">
    <location>
        <position position="511"/>
    </location>
</feature>
<feature type="glycosylation site" description="N-linked (GlcNAc...) asparagine" evidence="2">
    <location>
        <position position="530"/>
    </location>
</feature>
<feature type="glycosylation site" description="N-linked (GlcNAc...) asparagine" evidence="12">
    <location>
        <position position="634"/>
    </location>
</feature>
<feature type="glycosylation site" description="N-linked (GlcNAc...) asparagine" evidence="10 12">
    <location>
        <position position="761"/>
    </location>
</feature>
<feature type="glycosylation site" description="N-linked (GlcNAc...) asparagine" evidence="10 12">
    <location>
        <position position="1014"/>
    </location>
</feature>
<feature type="glycosylation site" description="N-linked (GlcNAc...) asparagine" evidence="10 12">
    <location>
        <position position="1341"/>
    </location>
</feature>
<feature type="glycosylation site" description="N-linked (GlcNAc...) asparagine" evidence="12">
    <location>
        <position position="1705"/>
    </location>
</feature>
<feature type="glycosylation site" description="N-linked (GlcNAc...) asparagine" evidence="10 12">
    <location>
        <position position="1756"/>
    </location>
</feature>
<feature type="glycosylation site" description="N-linked (GlcNAc...) asparagine" evidence="2">
    <location>
        <position position="1868"/>
    </location>
</feature>
<feature type="glycosylation site" description="N-linked (GlcNAc...) asparagine" evidence="12">
    <location>
        <position position="1944"/>
    </location>
</feature>
<feature type="glycosylation site" description="N-linked (GlcNAc...) asparagine" evidence="2">
    <location>
        <position position="1986"/>
    </location>
</feature>
<feature type="glycosylation site" description="N-linked (GlcNAc...) asparagine" evidence="2">
    <location>
        <position position="2002"/>
    </location>
</feature>
<feature type="glycosylation site" description="N-linked (GlcNAc...) asparagine" evidence="2">
    <location>
        <position position="2159"/>
    </location>
</feature>
<feature type="glycosylation site" description="N-linked (GlcNAc...) asparagine" evidence="12">
    <location>
        <position position="2207"/>
    </location>
</feature>
<feature type="glycosylation site" description="N-linked (GlcNAc...) asparagine" evidence="10 12">
    <location>
        <position position="2231"/>
    </location>
</feature>
<feature type="glycosylation site" description="N-linked (GlcNAc...) asparagine" evidence="10 12">
    <location>
        <position position="2235"/>
    </location>
</feature>
<feature type="glycosylation site" description="N-linked (GlcNAc...) asparagine" evidence="10 12">
    <location>
        <position position="2401"/>
    </location>
</feature>
<feature type="glycosylation site" description="N-linked (GlcNAc...) asparagine" evidence="2">
    <location>
        <position position="2421"/>
    </location>
</feature>
<feature type="glycosylation site" description="N-linked (GlcNAc...) asparagine" evidence="10 12">
    <location>
        <position position="2487"/>
    </location>
</feature>
<feature type="glycosylation site" description="N-linked (GlcNAc...) asparagine" evidence="2">
    <location>
        <position position="2821"/>
    </location>
</feature>
<feature type="glycosylation site" description="N-linked (GlcNAc...) asparagine" evidence="2">
    <location>
        <position position="3087"/>
    </location>
</feature>
<feature type="glycosylation site" description="N-linked (GlcNAc...) asparagine" evidence="2">
    <location>
        <position position="3242"/>
    </location>
</feature>
<feature type="glycosylation site" description="N-linked (GlcNAc...) asparagine" evidence="2">
    <location>
        <position position="3541"/>
    </location>
</feature>
<feature type="disulfide bond" evidence="5">
    <location>
        <begin position="298"/>
        <end position="307"/>
    </location>
</feature>
<feature type="disulfide bond" evidence="5">
    <location>
        <begin position="300"/>
        <end position="320"/>
    </location>
</feature>
<feature type="disulfide bond" evidence="5">
    <location>
        <begin position="322"/>
        <end position="331"/>
    </location>
</feature>
<feature type="disulfide bond" evidence="5">
    <location>
        <begin position="334"/>
        <end position="354"/>
    </location>
</feature>
<feature type="disulfide bond" evidence="5">
    <location>
        <begin position="357"/>
        <end position="366"/>
    </location>
</feature>
<feature type="disulfide bond" evidence="5">
    <location>
        <begin position="359"/>
        <end position="391"/>
    </location>
</feature>
<feature type="disulfide bond" evidence="5">
    <location>
        <begin position="394"/>
        <end position="403"/>
    </location>
</feature>
<feature type="disulfide bond" evidence="5">
    <location>
        <begin position="406"/>
        <end position="424"/>
    </location>
</feature>
<feature type="disulfide bond" evidence="5">
    <location>
        <begin position="427"/>
        <end position="438"/>
    </location>
</feature>
<feature type="disulfide bond" evidence="5">
    <location>
        <begin position="429"/>
        <end position="445"/>
    </location>
</feature>
<feature type="disulfide bond" evidence="5">
    <location>
        <begin position="447"/>
        <end position="456"/>
    </location>
</feature>
<feature type="disulfide bond" evidence="5">
    <location>
        <begin position="459"/>
        <end position="469"/>
    </location>
</feature>
<feature type="disulfide bond" evidence="5">
    <location>
        <begin position="472"/>
        <end position="484"/>
    </location>
</feature>
<feature type="disulfide bond" evidence="5">
    <location>
        <begin position="474"/>
        <end position="491"/>
    </location>
</feature>
<feature type="disulfide bond" evidence="5">
    <location>
        <begin position="493"/>
        <end position="502"/>
    </location>
</feature>
<feature type="disulfide bond" evidence="5">
    <location>
        <begin position="505"/>
        <end position="516"/>
    </location>
</feature>
<feature type="disulfide bond" evidence="5">
    <location>
        <begin position="519"/>
        <end position="531"/>
    </location>
</feature>
<feature type="disulfide bond" evidence="5">
    <location>
        <begin position="521"/>
        <end position="538"/>
    </location>
</feature>
<feature type="disulfide bond" evidence="5">
    <location>
        <begin position="540"/>
        <end position="549"/>
    </location>
</feature>
<feature type="disulfide bond" evidence="5">
    <location>
        <begin position="552"/>
        <end position="561"/>
    </location>
</feature>
<feature type="disulfide bond" evidence="5">
    <location>
        <begin position="564"/>
        <end position="576"/>
    </location>
</feature>
<feature type="disulfide bond" evidence="5">
    <location>
        <begin position="566"/>
        <end position="583"/>
    </location>
</feature>
<feature type="disulfide bond" evidence="5">
    <location>
        <begin position="585"/>
        <end position="594"/>
    </location>
</feature>
<feature type="disulfide bond" evidence="5">
    <location>
        <begin position="597"/>
        <end position="607"/>
    </location>
</feature>
<feature type="disulfide bond" evidence="5">
    <location>
        <begin position="610"/>
        <end position="622"/>
    </location>
</feature>
<feature type="disulfide bond" evidence="5">
    <location>
        <begin position="612"/>
        <end position="629"/>
    </location>
</feature>
<feature type="disulfide bond" evidence="5">
    <location>
        <begin position="631"/>
        <end position="640"/>
    </location>
</feature>
<feature type="disulfide bond" evidence="5">
    <location>
        <begin position="643"/>
        <end position="653"/>
    </location>
</feature>
<feature type="disulfide bond" evidence="5">
    <location>
        <begin position="656"/>
        <end position="668"/>
    </location>
</feature>
<feature type="disulfide bond" evidence="5">
    <location>
        <begin position="658"/>
        <end position="674"/>
    </location>
</feature>
<feature type="disulfide bond" evidence="5">
    <location>
        <begin position="676"/>
        <end position="685"/>
    </location>
</feature>
<feature type="disulfide bond" evidence="5">
    <location>
        <begin position="688"/>
        <end position="698"/>
    </location>
</feature>
<feature type="disulfide bond" evidence="5">
    <location>
        <begin position="701"/>
        <end position="715"/>
    </location>
</feature>
<feature type="disulfide bond" evidence="5">
    <location>
        <begin position="703"/>
        <end position="724"/>
    </location>
</feature>
<feature type="disulfide bond" evidence="5">
    <location>
        <begin position="726"/>
        <end position="735"/>
    </location>
</feature>
<feature type="disulfide bond" evidence="5">
    <location>
        <begin position="738"/>
        <end position="753"/>
    </location>
</feature>
<feature type="disulfide bond" evidence="5">
    <location>
        <begin position="756"/>
        <end position="770"/>
    </location>
</feature>
<feature type="disulfide bond" evidence="5">
    <location>
        <begin position="758"/>
        <end position="777"/>
    </location>
</feature>
<feature type="disulfide bond" evidence="5">
    <location>
        <begin position="779"/>
        <end position="788"/>
    </location>
</feature>
<feature type="disulfide bond" evidence="5">
    <location>
        <begin position="791"/>
        <end position="806"/>
    </location>
</feature>
<feature type="disulfide bond" evidence="5">
    <location>
        <begin position="809"/>
        <end position="821"/>
    </location>
</feature>
<feature type="disulfide bond" evidence="5">
    <location>
        <begin position="811"/>
        <end position="828"/>
    </location>
</feature>
<feature type="disulfide bond" evidence="5">
    <location>
        <begin position="830"/>
        <end position="839"/>
    </location>
</feature>
<feature type="disulfide bond" evidence="5">
    <location>
        <begin position="1415"/>
        <end position="1427"/>
    </location>
</feature>
<feature type="disulfide bond" evidence="5">
    <location>
        <begin position="1417"/>
        <end position="1434"/>
    </location>
</feature>
<feature type="disulfide bond" evidence="5">
    <location>
        <begin position="1436"/>
        <end position="1445"/>
    </location>
</feature>
<feature type="disulfide bond" evidence="5">
    <location>
        <begin position="1448"/>
        <end position="1458"/>
    </location>
</feature>
<feature type="disulfide bond" evidence="5">
    <location>
        <begin position="1461"/>
        <end position="1469"/>
    </location>
</feature>
<feature type="disulfide bond" evidence="5">
    <location>
        <begin position="1463"/>
        <end position="1476"/>
    </location>
</feature>
<feature type="disulfide bond" evidence="5">
    <location>
        <begin position="1478"/>
        <end position="1487"/>
    </location>
</feature>
<feature type="disulfide bond" evidence="5">
    <location>
        <begin position="1490"/>
        <end position="1503"/>
    </location>
</feature>
<feature type="disulfide bond" evidence="5">
    <location>
        <begin position="1506"/>
        <end position="1520"/>
    </location>
</feature>
<feature type="disulfide bond" evidence="5">
    <location>
        <begin position="1508"/>
        <end position="1527"/>
    </location>
</feature>
<feature type="disulfide bond" evidence="5">
    <location>
        <begin position="1529"/>
        <end position="1538"/>
    </location>
</feature>
<feature type="disulfide bond" evidence="5">
    <location>
        <begin position="1541"/>
        <end position="1551"/>
    </location>
</feature>
<feature type="disulfide bond" evidence="5">
    <location>
        <begin position="1554"/>
        <end position="1566"/>
    </location>
</feature>
<feature type="disulfide bond" evidence="5">
    <location>
        <begin position="1556"/>
        <end position="1573"/>
    </location>
</feature>
<feature type="disulfide bond" evidence="5">
    <location>
        <begin position="1575"/>
        <end position="1584"/>
    </location>
</feature>
<feature type="disulfide bond" evidence="5">
    <location>
        <begin position="1587"/>
        <end position="1602"/>
    </location>
</feature>
<feature type="disulfide bond" evidence="5">
    <location>
        <begin position="1830"/>
        <end position="1839"/>
    </location>
</feature>
<feature type="disulfide bond" evidence="5">
    <location>
        <begin position="1832"/>
        <end position="1846"/>
    </location>
</feature>
<feature type="disulfide bond" evidence="5">
    <location>
        <begin position="1849"/>
        <end position="1858"/>
    </location>
</feature>
<feature type="disulfide bond" evidence="5">
    <location>
        <begin position="1861"/>
        <end position="1877"/>
    </location>
</feature>
<feature type="disulfide bond" evidence="5">
    <location>
        <begin position="1880"/>
        <end position="1894"/>
    </location>
</feature>
<feature type="disulfide bond" evidence="5">
    <location>
        <begin position="1882"/>
        <end position="1905"/>
    </location>
</feature>
<feature type="disulfide bond" evidence="5">
    <location>
        <begin position="1907"/>
        <end position="1916"/>
    </location>
</feature>
<feature type="disulfide bond" evidence="5">
    <location>
        <begin position="1919"/>
        <end position="1934"/>
    </location>
</feature>
<feature type="disulfide bond" evidence="5">
    <location>
        <begin position="1937"/>
        <end position="1951"/>
    </location>
</feature>
<feature type="disulfide bond" evidence="5">
    <location>
        <begin position="1939"/>
        <end position="1958"/>
    </location>
</feature>
<feature type="disulfide bond" evidence="5">
    <location>
        <begin position="1961"/>
        <end position="1970"/>
    </location>
</feature>
<feature type="disulfide bond" evidence="5">
    <location>
        <begin position="1973"/>
        <end position="1987"/>
    </location>
</feature>
<feature type="disulfide bond" evidence="5">
    <location>
        <begin position="1990"/>
        <end position="2000"/>
    </location>
</feature>
<feature type="disulfide bond" evidence="5">
    <location>
        <begin position="1992"/>
        <end position="2007"/>
    </location>
</feature>
<feature type="disulfide bond" evidence="5">
    <location>
        <begin position="2009"/>
        <end position="2018"/>
    </location>
</feature>
<feature type="disulfide bond" evidence="5">
    <location>
        <begin position="2021"/>
        <end position="2031"/>
    </location>
</feature>
<feature type="disulfide bond" evidence="5">
    <location>
        <begin position="2037"/>
        <end position="2048"/>
    </location>
</feature>
<feature type="disulfide bond" evidence="5">
    <location>
        <begin position="2039"/>
        <end position="2055"/>
    </location>
</feature>
<feature type="disulfide bond" evidence="5">
    <location>
        <begin position="2057"/>
        <end position="2066"/>
    </location>
</feature>
<feature type="disulfide bond" evidence="5">
    <location>
        <begin position="2069"/>
        <end position="2081"/>
    </location>
</feature>
<feature type="disulfide bond" evidence="5">
    <location>
        <begin position="2084"/>
        <end position="2096"/>
    </location>
</feature>
<feature type="disulfide bond" evidence="5">
    <location>
        <begin position="2086"/>
        <end position="2103"/>
    </location>
</feature>
<feature type="disulfide bond" evidence="5">
    <location>
        <begin position="2105"/>
        <end position="2114"/>
    </location>
</feature>
<feature type="disulfide bond" evidence="5">
    <location>
        <begin position="2117"/>
        <end position="2129"/>
    </location>
</feature>
<feature type="disulfide bond" evidence="3">
    <location>
        <begin position="3040"/>
        <end position="3066"/>
    </location>
</feature>
<feature type="disulfide bond" evidence="3">
    <location>
        <begin position="3209"/>
        <end position="3235"/>
    </location>
</feature>
<feature type="disulfide bond" evidence="3">
    <location>
        <begin position="3460"/>
        <end position="3482"/>
    </location>
</feature>
<feature type="disulfide bond" evidence="3">
    <location>
        <begin position="3633"/>
        <end position="3669"/>
    </location>
</feature>
<feature type="mutagenesis site" description="In rh152; causes ectopic muscle membrane extensions." evidence="11">
    <original>L</original>
    <variation>F</variation>
    <location>
        <position position="2802"/>
    </location>
</feature>
<accession>Q21313</accession>
<keyword id="KW-0084">Basement membrane</keyword>
<keyword id="KW-1015">Disulfide bond</keyword>
<keyword id="KW-0272">Extracellular matrix</keyword>
<keyword id="KW-0325">Glycoprotein</keyword>
<keyword id="KW-0424">Laminin EGF-like domain</keyword>
<keyword id="KW-1185">Reference proteome</keyword>
<keyword id="KW-0677">Repeat</keyword>
<keyword id="KW-0964">Secreted</keyword>
<keyword id="KW-0732">Signal</keyword>
<reference key="1">
    <citation type="journal article" date="1998" name="Science">
        <title>Genome sequence of the nematode C. elegans: a platform for investigating biology.</title>
        <authorList>
            <consortium name="The C. elegans sequencing consortium"/>
        </authorList>
    </citation>
    <scope>NUCLEOTIDE SEQUENCE [LARGE SCALE GENOMIC DNA]</scope>
    <source>
        <strain>Bristol N2</strain>
    </source>
</reference>
<reference key="2">
    <citation type="journal article" date="2003" name="Development">
        <title>Laminin alpha subunits and their role in C. elegans development.</title>
        <authorList>
            <person name="Huang C.C."/>
            <person name="Hall D.H."/>
            <person name="Hedgecock E.M."/>
            <person name="Kao G."/>
            <person name="Karantza V."/>
            <person name="Vogel B.E."/>
            <person name="Hutter H."/>
            <person name="Chisholm A.D."/>
            <person name="Yurchenco P.D."/>
            <person name="Wadsworth W.G."/>
        </authorList>
    </citation>
    <scope>FUNCTION</scope>
    <scope>SUBCELLULAR LOCATION</scope>
    <scope>DEVELOPMENTAL STAGE</scope>
    <scope>DISRUPTION PHENOTYPE</scope>
    <source>
        <strain>Bristol N2</strain>
    </source>
</reference>
<reference key="3">
    <citation type="journal article" date="2003" name="Nat. Biotechnol.">
        <title>Lectin affinity capture, isotope-coded tagging and mass spectrometry to identify N-linked glycoproteins.</title>
        <authorList>
            <person name="Kaji H."/>
            <person name="Saito H."/>
            <person name="Yamauchi Y."/>
            <person name="Shinkawa T."/>
            <person name="Taoka M."/>
            <person name="Hirabayashi J."/>
            <person name="Kasai K."/>
            <person name="Takahashi N."/>
            <person name="Isobe T."/>
        </authorList>
    </citation>
    <scope>GLYCOSYLATION [LARGE SCALE ANALYSIS] AT ASN-249</scope>
    <scope>IDENTIFICATION BY MASS SPECTROMETRY</scope>
    <source>
        <strain>Bristol N2</strain>
    </source>
</reference>
<reference key="4">
    <citation type="journal article" date="2005" name="Glycobiology">
        <title>Identification of the hydrophobic glycoproteins of Caenorhabditis elegans.</title>
        <authorList>
            <person name="Fan X."/>
            <person name="She Y.-M."/>
            <person name="Bagshaw R.D."/>
            <person name="Callahan J.W."/>
            <person name="Schachter H."/>
            <person name="Mahuran D.J."/>
        </authorList>
    </citation>
    <scope>GLYCOSYLATION [LARGE SCALE ANALYSIS] AT ASN-249; ASN-351; ASN-761; ASN-1014; ASN-1341; ASN-1756; ASN-2231; ASN-2235; ASN-2401 AND ASN-2487</scope>
    <scope>IDENTIFICATION BY MASS SPECTROMETRY</scope>
</reference>
<reference key="5">
    <citation type="journal article" date="2006" name="Development">
        <title>FGF negatively regulates muscle membrane extension in Caenorhabditis elegans.</title>
        <authorList>
            <person name="Dixon S.J."/>
            <person name="Alexander M."/>
            <person name="Fernandes R."/>
            <person name="Ricker N."/>
            <person name="Roy P.J."/>
        </authorList>
    </citation>
    <scope>FUNCTION</scope>
    <scope>DISRUPTION PHENOTYPE</scope>
    <scope>MUTAGENESIS OF LEU-2802</scope>
</reference>
<reference key="6">
    <citation type="journal article" date="2007" name="Mol. Cell. Proteomics">
        <title>Proteomics reveals N-linked glycoprotein diversity in Caenorhabditis elegans and suggests an atypical translocation mechanism for integral membrane proteins.</title>
        <authorList>
            <person name="Kaji H."/>
            <person name="Kamiie J."/>
            <person name="Kawakami H."/>
            <person name="Kido K."/>
            <person name="Yamauchi Y."/>
            <person name="Shinkawa T."/>
            <person name="Taoka M."/>
            <person name="Takahashi N."/>
            <person name="Isobe T."/>
        </authorList>
    </citation>
    <scope>GLYCOSYLATION [LARGE SCALE ANALYSIS] AT ASN-121; ASN-249; ASN-351; ASN-477; ASN-634; ASN-761; ASN-1014; ASN-1341; ASN-1705; ASN-1756; ASN-1944; ASN-2207; ASN-2231; ASN-2235; ASN-2401 AND ASN-2487</scope>
    <scope>IDENTIFICATION BY MASS SPECTROMETRY</scope>
    <source>
        <strain>Bristol N2</strain>
    </source>
</reference>
<dbReference type="EMBL" id="Z70286">
    <property type="protein sequence ID" value="CAA94293.1"/>
    <property type="molecule type" value="Genomic_DNA"/>
</dbReference>
<dbReference type="PIR" id="T23433">
    <property type="entry name" value="T23433"/>
</dbReference>
<dbReference type="RefSeq" id="NP_001023282.1">
    <property type="nucleotide sequence ID" value="NM_001028111.5"/>
</dbReference>
<dbReference type="SMR" id="Q21313"/>
<dbReference type="BioGRID" id="43057">
    <property type="interactions" value="11"/>
</dbReference>
<dbReference type="FunCoup" id="Q21313">
    <property type="interactions" value="433"/>
</dbReference>
<dbReference type="STRING" id="6239.K08C7.3f.1"/>
<dbReference type="GlyCosmos" id="Q21313">
    <property type="glycosylation" value="28 sites, No reported glycans"/>
</dbReference>
<dbReference type="iPTMnet" id="Q21313"/>
<dbReference type="PaxDb" id="6239-K08C7.3a.1"/>
<dbReference type="EnsemblMetazoa" id="K08C7.3b.1">
    <property type="protein sequence ID" value="K08C7.3b.1"/>
    <property type="gene ID" value="WBGene00001328"/>
</dbReference>
<dbReference type="GeneID" id="177956"/>
<dbReference type="KEGG" id="cel:CELE_K08C7.3"/>
<dbReference type="UCSC" id="K08C7.3a">
    <property type="organism name" value="c. elegans"/>
</dbReference>
<dbReference type="AGR" id="WB:WBGene00001328"/>
<dbReference type="CTD" id="177956"/>
<dbReference type="WormBase" id="K08C7.3b">
    <property type="protein sequence ID" value="CE06136"/>
    <property type="gene ID" value="WBGene00001328"/>
    <property type="gene designation" value="epi-1"/>
</dbReference>
<dbReference type="eggNOG" id="KOG1836">
    <property type="taxonomic scope" value="Eukaryota"/>
</dbReference>
<dbReference type="GeneTree" id="ENSGT00940000167067"/>
<dbReference type="InParanoid" id="Q21313"/>
<dbReference type="OrthoDB" id="10011303at2759"/>
<dbReference type="PRO" id="PR:Q21313"/>
<dbReference type="Proteomes" id="UP000001940">
    <property type="component" value="Chromosome IV"/>
</dbReference>
<dbReference type="Bgee" id="WBGene00001328">
    <property type="expression patterns" value="Expressed in embryo and 12 other cell types or tissues"/>
</dbReference>
<dbReference type="ExpressionAtlas" id="Q21313">
    <property type="expression patterns" value="baseline and differential"/>
</dbReference>
<dbReference type="GO" id="GO:0005604">
    <property type="term" value="C:basement membrane"/>
    <property type="evidence" value="ECO:0000314"/>
    <property type="project" value="WormBase"/>
</dbReference>
<dbReference type="GO" id="GO:0005576">
    <property type="term" value="C:extracellular region"/>
    <property type="evidence" value="ECO:0007669"/>
    <property type="project" value="UniProtKB-SubCell"/>
</dbReference>
<dbReference type="GO" id="GO:0005201">
    <property type="term" value="F:extracellular matrix structural constituent"/>
    <property type="evidence" value="ECO:0000250"/>
    <property type="project" value="WormBase"/>
</dbReference>
<dbReference type="GO" id="GO:0009887">
    <property type="term" value="P:animal organ morphogenesis"/>
    <property type="evidence" value="ECO:0000318"/>
    <property type="project" value="GO_Central"/>
</dbReference>
<dbReference type="GO" id="GO:0007411">
    <property type="term" value="P:axon guidance"/>
    <property type="evidence" value="ECO:0000318"/>
    <property type="project" value="GO_Central"/>
</dbReference>
<dbReference type="GO" id="GO:0007414">
    <property type="term" value="P:axonal defasciculation"/>
    <property type="evidence" value="ECO:0000315"/>
    <property type="project" value="WormBase"/>
</dbReference>
<dbReference type="GO" id="GO:0071711">
    <property type="term" value="P:basement membrane organization"/>
    <property type="evidence" value="ECO:0000315"/>
    <property type="project" value="WormBase"/>
</dbReference>
<dbReference type="GO" id="GO:0007155">
    <property type="term" value="P:cell adhesion"/>
    <property type="evidence" value="ECO:0007669"/>
    <property type="project" value="InterPro"/>
</dbReference>
<dbReference type="GO" id="GO:0016477">
    <property type="term" value="P:cell migration"/>
    <property type="evidence" value="ECO:0000315"/>
    <property type="project" value="WormBase"/>
</dbReference>
<dbReference type="GO" id="GO:0001764">
    <property type="term" value="P:neuron migration"/>
    <property type="evidence" value="ECO:0000315"/>
    <property type="project" value="WormBase"/>
</dbReference>
<dbReference type="GO" id="GO:0040017">
    <property type="term" value="P:positive regulation of locomotion"/>
    <property type="evidence" value="ECO:0000315"/>
    <property type="project" value="WormBase"/>
</dbReference>
<dbReference type="GO" id="GO:0042127">
    <property type="term" value="P:regulation of cell population proliferation"/>
    <property type="evidence" value="ECO:0000315"/>
    <property type="project" value="WormBase"/>
</dbReference>
<dbReference type="GO" id="GO:0022414">
    <property type="term" value="P:reproductive process"/>
    <property type="evidence" value="ECO:0000315"/>
    <property type="project" value="WormBase"/>
</dbReference>
<dbReference type="GO" id="GO:0009408">
    <property type="term" value="P:response to heat"/>
    <property type="evidence" value="ECO:0000315"/>
    <property type="project" value="WormBase"/>
</dbReference>
<dbReference type="GO" id="GO:0051788">
    <property type="term" value="P:response to misfolded protein"/>
    <property type="evidence" value="ECO:0000315"/>
    <property type="project" value="WormBase"/>
</dbReference>
<dbReference type="GO" id="GO:0009888">
    <property type="term" value="P:tissue development"/>
    <property type="evidence" value="ECO:0000318"/>
    <property type="project" value="GO_Central"/>
</dbReference>
<dbReference type="CDD" id="cd02795">
    <property type="entry name" value="CBM6-CBM35-CBM36_like"/>
    <property type="match status" value="1"/>
</dbReference>
<dbReference type="CDD" id="cd00055">
    <property type="entry name" value="EGF_Lam"/>
    <property type="match status" value="20"/>
</dbReference>
<dbReference type="CDD" id="cd00110">
    <property type="entry name" value="LamG"/>
    <property type="match status" value="4"/>
</dbReference>
<dbReference type="FunFam" id="2.10.25.10:FF:000011">
    <property type="entry name" value="Cadherin EGF LAG seven-pass G-type receptor"/>
    <property type="match status" value="1"/>
</dbReference>
<dbReference type="FunFam" id="2.10.25.10:FF:000106">
    <property type="entry name" value="Heparan sulfate proteoglycan 2"/>
    <property type="match status" value="1"/>
</dbReference>
<dbReference type="FunFam" id="2.10.25.10:FF:000083">
    <property type="entry name" value="Laminin subunit alpha"/>
    <property type="match status" value="1"/>
</dbReference>
<dbReference type="FunFam" id="2.10.25.10:FF:000388">
    <property type="entry name" value="Laminin subunit alpha"/>
    <property type="match status" value="1"/>
</dbReference>
<dbReference type="FunFam" id="2.10.25.10:FF:000090">
    <property type="entry name" value="laminin subunit alpha"/>
    <property type="match status" value="1"/>
</dbReference>
<dbReference type="FunFam" id="2.10.25.10:FF:000069">
    <property type="entry name" value="Laminin subunit alpha 1"/>
    <property type="match status" value="1"/>
</dbReference>
<dbReference type="FunFam" id="2.10.25.10:FF:000082">
    <property type="entry name" value="Laminin subunit alpha 1"/>
    <property type="match status" value="1"/>
</dbReference>
<dbReference type="FunFam" id="2.10.25.10:FF:000189">
    <property type="entry name" value="Laminin subunit alpha 2"/>
    <property type="match status" value="1"/>
</dbReference>
<dbReference type="FunFam" id="2.60.120.260:FF:000017">
    <property type="entry name" value="Laminin subunit alpha 2"/>
    <property type="match status" value="1"/>
</dbReference>
<dbReference type="FunFam" id="2.10.25.10:FF:000034">
    <property type="entry name" value="Laminin subunit alpha 3"/>
    <property type="match status" value="2"/>
</dbReference>
<dbReference type="FunFam" id="2.10.25.10:FF:000051">
    <property type="entry name" value="Laminin subunit alpha 4"/>
    <property type="match status" value="1"/>
</dbReference>
<dbReference type="FunFam" id="2.10.25.10:FF:000209">
    <property type="entry name" value="Laminin subunit alpha 5"/>
    <property type="match status" value="1"/>
</dbReference>
<dbReference type="FunFam" id="2.10.25.10:FF:000407">
    <property type="entry name" value="Laminin subunit alpha-3"/>
    <property type="match status" value="1"/>
</dbReference>
<dbReference type="FunFam" id="2.60.120.200:FF:000160">
    <property type="entry name" value="Laminin subunit alpha-3"/>
    <property type="match status" value="1"/>
</dbReference>
<dbReference type="FunFam" id="2.10.25.10:FF:000188">
    <property type="entry name" value="Laminin subunit gamma 2"/>
    <property type="match status" value="1"/>
</dbReference>
<dbReference type="FunFam" id="2.10.25.10:FF:000711">
    <property type="entry name" value="Laminin-like protein epi-1"/>
    <property type="match status" value="1"/>
</dbReference>
<dbReference type="FunFam" id="2.10.25.10:FF:000726">
    <property type="entry name" value="Laminin-like protein epi-1"/>
    <property type="match status" value="1"/>
</dbReference>
<dbReference type="FunFam" id="2.60.120.200:FF:000222">
    <property type="entry name" value="Laminin-like protein epi-1"/>
    <property type="match status" value="1"/>
</dbReference>
<dbReference type="FunFam" id="2.60.120.200:FF:000264">
    <property type="entry name" value="Laminin-like protein epi-1"/>
    <property type="match status" value="1"/>
</dbReference>
<dbReference type="FunFam" id="2.60.120.200:FF:000272">
    <property type="entry name" value="Laminin-like protein epi-1"/>
    <property type="match status" value="1"/>
</dbReference>
<dbReference type="FunFam" id="2.60.120.200:FF:000306">
    <property type="entry name" value="Laminin-like protein epi-1"/>
    <property type="match status" value="1"/>
</dbReference>
<dbReference type="Gene3D" id="2.60.120.200">
    <property type="match status" value="5"/>
</dbReference>
<dbReference type="Gene3D" id="2.60.120.260">
    <property type="entry name" value="Galactose-binding domain-like"/>
    <property type="match status" value="2"/>
</dbReference>
<dbReference type="Gene3D" id="2.10.25.10">
    <property type="entry name" value="Laminin"/>
    <property type="match status" value="20"/>
</dbReference>
<dbReference type="Gene3D" id="1.10.287.950">
    <property type="entry name" value="Methyl-accepting chemotaxis protein"/>
    <property type="match status" value="1"/>
</dbReference>
<dbReference type="InterPro" id="IPR013320">
    <property type="entry name" value="ConA-like_dom_sf"/>
</dbReference>
<dbReference type="InterPro" id="IPR000742">
    <property type="entry name" value="EGF-like_dom"/>
</dbReference>
<dbReference type="InterPro" id="IPR008979">
    <property type="entry name" value="Galactose-bd-like_sf"/>
</dbReference>
<dbReference type="InterPro" id="IPR050440">
    <property type="entry name" value="Laminin/Netrin_ECM"/>
</dbReference>
<dbReference type="InterPro" id="IPR010307">
    <property type="entry name" value="Laminin_dom_II"/>
</dbReference>
<dbReference type="InterPro" id="IPR001791">
    <property type="entry name" value="Laminin_G"/>
</dbReference>
<dbReference type="InterPro" id="IPR000034">
    <property type="entry name" value="Laminin_IV"/>
</dbReference>
<dbReference type="InterPro" id="IPR008211">
    <property type="entry name" value="Laminin_N"/>
</dbReference>
<dbReference type="InterPro" id="IPR002049">
    <property type="entry name" value="LE_dom"/>
</dbReference>
<dbReference type="InterPro" id="IPR056863">
    <property type="entry name" value="LMN_ATRN_NET-like_EGF"/>
</dbReference>
<dbReference type="PANTHER" id="PTHR10574:SF406">
    <property type="entry name" value="LAMININ SUBUNIT ALPHA 5"/>
    <property type="match status" value="1"/>
</dbReference>
<dbReference type="PANTHER" id="PTHR10574">
    <property type="entry name" value="NETRIN/LAMININ-RELATED"/>
    <property type="match status" value="1"/>
</dbReference>
<dbReference type="Pfam" id="PF00053">
    <property type="entry name" value="EGF_laminin"/>
    <property type="match status" value="20"/>
</dbReference>
<dbReference type="Pfam" id="PF24973">
    <property type="entry name" value="EGF_LMN_ATRN"/>
    <property type="match status" value="1"/>
</dbReference>
<dbReference type="Pfam" id="PF00052">
    <property type="entry name" value="Laminin_B"/>
    <property type="match status" value="1"/>
</dbReference>
<dbReference type="Pfam" id="PF02210">
    <property type="entry name" value="Laminin_G_2"/>
    <property type="match status" value="4"/>
</dbReference>
<dbReference type="Pfam" id="PF06009">
    <property type="entry name" value="Laminin_II"/>
    <property type="match status" value="1"/>
</dbReference>
<dbReference type="Pfam" id="PF00055">
    <property type="entry name" value="Laminin_N"/>
    <property type="match status" value="1"/>
</dbReference>
<dbReference type="PRINTS" id="PR00011">
    <property type="entry name" value="EGFLAMININ"/>
</dbReference>
<dbReference type="SMART" id="SM00181">
    <property type="entry name" value="EGF"/>
    <property type="match status" value="14"/>
</dbReference>
<dbReference type="SMART" id="SM00180">
    <property type="entry name" value="EGF_Lam"/>
    <property type="match status" value="21"/>
</dbReference>
<dbReference type="SMART" id="SM00281">
    <property type="entry name" value="LamB"/>
    <property type="match status" value="1"/>
</dbReference>
<dbReference type="SMART" id="SM00282">
    <property type="entry name" value="LamG"/>
    <property type="match status" value="5"/>
</dbReference>
<dbReference type="SMART" id="SM00136">
    <property type="entry name" value="LamNT"/>
    <property type="match status" value="1"/>
</dbReference>
<dbReference type="SUPFAM" id="SSF49899">
    <property type="entry name" value="Concanavalin A-like lectins/glucanases"/>
    <property type="match status" value="5"/>
</dbReference>
<dbReference type="SUPFAM" id="SSF57196">
    <property type="entry name" value="EGF/Laminin"/>
    <property type="match status" value="18"/>
</dbReference>
<dbReference type="SUPFAM" id="SSF49785">
    <property type="entry name" value="Galactose-binding domain-like"/>
    <property type="match status" value="1"/>
</dbReference>
<dbReference type="PROSITE" id="PS00022">
    <property type="entry name" value="EGF_1"/>
    <property type="match status" value="19"/>
</dbReference>
<dbReference type="PROSITE" id="PS01186">
    <property type="entry name" value="EGF_2"/>
    <property type="match status" value="4"/>
</dbReference>
<dbReference type="PROSITE" id="PS01248">
    <property type="entry name" value="EGF_LAM_1"/>
    <property type="match status" value="21"/>
</dbReference>
<dbReference type="PROSITE" id="PS50027">
    <property type="entry name" value="EGF_LAM_2"/>
    <property type="match status" value="21"/>
</dbReference>
<dbReference type="PROSITE" id="PS50025">
    <property type="entry name" value="LAM_G_DOMAIN"/>
    <property type="match status" value="5"/>
</dbReference>
<dbReference type="PROSITE" id="PS51115">
    <property type="entry name" value="LAMININ_IVA"/>
    <property type="match status" value="1"/>
</dbReference>
<dbReference type="PROSITE" id="PS51117">
    <property type="entry name" value="LAMININ_NTER"/>
    <property type="match status" value="1"/>
</dbReference>